<keyword id="KW-0002">3D-structure</keyword>
<keyword id="KW-0238">DNA-binding</keyword>
<keyword id="KW-0539">Nucleus</keyword>
<keyword id="KW-1185">Reference proteome</keyword>
<keyword id="KW-0346">Stress response</keyword>
<keyword id="KW-0804">Transcription</keyword>
<keyword id="KW-0805">Transcription regulation</keyword>
<accession>Q53K16</accession>
<proteinExistence type="evidence at protein level"/>
<organism evidence="7">
    <name type="scientific">Oryza sativa subsp. japonica</name>
    <name type="common">Rice</name>
    <dbReference type="NCBI Taxonomy" id="39947"/>
    <lineage>
        <taxon>Eukaryota</taxon>
        <taxon>Viridiplantae</taxon>
        <taxon>Streptophyta</taxon>
        <taxon>Embryophyta</taxon>
        <taxon>Tracheophyta</taxon>
        <taxon>Spermatophyta</taxon>
        <taxon>Magnoliopsida</taxon>
        <taxon>Liliopsida</taxon>
        <taxon>Poales</taxon>
        <taxon>Poaceae</taxon>
        <taxon>BOP clade</taxon>
        <taxon>Oryzoideae</taxon>
        <taxon>Oryzeae</taxon>
        <taxon>Oryzinae</taxon>
        <taxon>Oryza</taxon>
        <taxon>Oryza sativa</taxon>
    </lineage>
</organism>
<comment type="function">
    <text evidence="1 2 5">Probable transcription factor involved in plant development (By similarity). Involved in environmental abiotic stress resistance. May increase the expression of stress-responsive genes (By similarity). Binds DNA in vitro (PubMed:27081181).</text>
</comment>
<comment type="subunit">
    <text evidence="5">Homodimer.</text>
</comment>
<comment type="subcellular location">
    <subcellularLocation>
        <location evidence="1">Nucleus</location>
    </subcellularLocation>
</comment>
<comment type="domain">
    <text evidence="5">The GRAS domain is involved in DNA-binding.</text>
</comment>
<comment type="similarity">
    <text evidence="3 6">Belongs to the GRAS family.</text>
</comment>
<sequence length="578" mass="62478">MAYMCADSGNLMAIAQQVIQQQQQQQQQQQRHHHHHHLPPPPPPQSMAPHHHQQKHHHHHQQMPAMPQAPPSSHGQIPGQLAYGGGAAWPAGEHFFADAFGASAGDAVFSDLAAAADFDSDGWMESLIGDAPFQDSDLERLIFTTPPPPVPSPPPTHAAATATATAATAAPRPEAAPALLPQPAAATPVACSSPSPSSADASCSAPILQSLLSCSRAAATDPGLAAAELASVRAAATDAGDPSERLAFYFADALSRRLACGTGAPPSAEPDARFASDELTLCYKTLNDACPYSKFAHLTANQAILEATGAATKIHIVDFGIVQGIQWAALLQALATRPEGKPTRIRITGVPSPLLGPQPAASLAATNTRLRDFAKLLGVDFEFVPLLRPVHELNKSDFLVEPDEAVAVNFMLQLYHLLGDSDELVRRVLRLAKSLSPAVVTLGEYEVSLNRAGFVDRFANALSYYRSLFESLDVAMTRDSPERVRVERWMFGERIQRAVGPEEGADRTERMAGSSEWQTLMEWCGFEPVPLSNYARSQADLLLWNYDSKYKYSLVELPPAFLSLAWEKRPLLTVSAWR</sequence>
<dbReference type="EMBL" id="AC146936">
    <property type="protein sequence ID" value="AAX95685.1"/>
    <property type="molecule type" value="Genomic_DNA"/>
</dbReference>
<dbReference type="EMBL" id="DP000009">
    <property type="protein sequence ID" value="ABF98609.1"/>
    <property type="molecule type" value="Genomic_DNA"/>
</dbReference>
<dbReference type="EMBL" id="AP008209">
    <property type="protein sequence ID" value="BAF13029.1"/>
    <property type="molecule type" value="Genomic_DNA"/>
</dbReference>
<dbReference type="EMBL" id="AP014959">
    <property type="protein sequence ID" value="BAS86141.1"/>
    <property type="molecule type" value="Genomic_DNA"/>
</dbReference>
<dbReference type="EMBL" id="AK064022">
    <property type="protein sequence ID" value="BAG88969.1"/>
    <property type="molecule type" value="mRNA"/>
</dbReference>
<dbReference type="EMBL" id="AK101603">
    <property type="protein sequence ID" value="BAG95146.1"/>
    <property type="molecule type" value="mRNA"/>
</dbReference>
<dbReference type="EMBL" id="AK102857">
    <property type="protein sequence ID" value="BAG95752.1"/>
    <property type="molecule type" value="mRNA"/>
</dbReference>
<dbReference type="RefSeq" id="XP_015628849.1">
    <property type="nucleotide sequence ID" value="XM_015773363.1"/>
</dbReference>
<dbReference type="PDB" id="5HYZ">
    <property type="method" value="X-ray"/>
    <property type="resolution" value="1.82 A"/>
    <property type="chains" value="A=204-578"/>
</dbReference>
<dbReference type="PDBsum" id="5HYZ"/>
<dbReference type="SMR" id="Q53K16"/>
<dbReference type="FunCoup" id="Q53K16">
    <property type="interactions" value="884"/>
</dbReference>
<dbReference type="PaxDb" id="39947-Q53K16"/>
<dbReference type="EnsemblPlants" id="Os03t0723000-01">
    <property type="protein sequence ID" value="Os03t0723000-01"/>
    <property type="gene ID" value="Os03g0723000"/>
</dbReference>
<dbReference type="EnsemblPlants" id="Os03t0723000-02">
    <property type="protein sequence ID" value="Os03t0723000-02"/>
    <property type="gene ID" value="Os03g0723000"/>
</dbReference>
<dbReference type="Gramene" id="Os03t0723000-01">
    <property type="protein sequence ID" value="Os03t0723000-01"/>
    <property type="gene ID" value="Os03g0723000"/>
</dbReference>
<dbReference type="Gramene" id="Os03t0723000-02">
    <property type="protein sequence ID" value="Os03t0723000-02"/>
    <property type="gene ID" value="Os03g0723000"/>
</dbReference>
<dbReference type="KEGG" id="dosa:Os03g0723000"/>
<dbReference type="eggNOG" id="ENOG502QTXA">
    <property type="taxonomic scope" value="Eukaryota"/>
</dbReference>
<dbReference type="HOGENOM" id="CLU_011924_0_5_1"/>
<dbReference type="InParanoid" id="Q53K16"/>
<dbReference type="OMA" id="EPNMTRD"/>
<dbReference type="OrthoDB" id="1890360at2759"/>
<dbReference type="Proteomes" id="UP000000763">
    <property type="component" value="Chromosome 3"/>
</dbReference>
<dbReference type="Proteomes" id="UP000059680">
    <property type="component" value="Chromosome 3"/>
</dbReference>
<dbReference type="GO" id="GO:0005634">
    <property type="term" value="C:nucleus"/>
    <property type="evidence" value="ECO:0000318"/>
    <property type="project" value="GO_Central"/>
</dbReference>
<dbReference type="GO" id="GO:0003700">
    <property type="term" value="F:DNA-binding transcription factor activity"/>
    <property type="evidence" value="ECO:0000318"/>
    <property type="project" value="GO_Central"/>
</dbReference>
<dbReference type="GO" id="GO:0043565">
    <property type="term" value="F:sequence-specific DNA binding"/>
    <property type="evidence" value="ECO:0000318"/>
    <property type="project" value="GO_Central"/>
</dbReference>
<dbReference type="GO" id="GO:0006355">
    <property type="term" value="P:regulation of DNA-templated transcription"/>
    <property type="evidence" value="ECO:0000318"/>
    <property type="project" value="GO_Central"/>
</dbReference>
<dbReference type="InterPro" id="IPR005202">
    <property type="entry name" value="TF_GRAS"/>
</dbReference>
<dbReference type="PANTHER" id="PTHR31636">
    <property type="entry name" value="OSJNBA0084A10.13 PROTEIN-RELATED"/>
    <property type="match status" value="1"/>
</dbReference>
<dbReference type="Pfam" id="PF03514">
    <property type="entry name" value="GRAS"/>
    <property type="match status" value="1"/>
</dbReference>
<dbReference type="PROSITE" id="PS50985">
    <property type="entry name" value="GRAS"/>
    <property type="match status" value="1"/>
</dbReference>
<reference key="1">
    <citation type="journal article" date="2005" name="Genome Res.">
        <title>Sequence, annotation, and analysis of synteny between rice chromosome 3 and diverged grass species.</title>
        <authorList>
            <consortium name="The rice chromosome 3 sequencing consortium"/>
            <person name="Buell C.R."/>
            <person name="Yuan Q."/>
            <person name="Ouyang S."/>
            <person name="Liu J."/>
            <person name="Zhu W."/>
            <person name="Wang A."/>
            <person name="Maiti R."/>
            <person name="Haas B."/>
            <person name="Wortman J."/>
            <person name="Pertea M."/>
            <person name="Jones K.M."/>
            <person name="Kim M."/>
            <person name="Overton L."/>
            <person name="Tsitrin T."/>
            <person name="Fadrosh D."/>
            <person name="Bera J."/>
            <person name="Weaver B."/>
            <person name="Jin S."/>
            <person name="Johri S."/>
            <person name="Reardon M."/>
            <person name="Webb K."/>
            <person name="Hill J."/>
            <person name="Moffat K."/>
            <person name="Tallon L."/>
            <person name="Van Aken S."/>
            <person name="Lewis M."/>
            <person name="Utterback T."/>
            <person name="Feldblyum T."/>
            <person name="Zismann V."/>
            <person name="Iobst S."/>
            <person name="Hsiao J."/>
            <person name="de Vazeille A.R."/>
            <person name="Salzberg S.L."/>
            <person name="White O."/>
            <person name="Fraser C.M."/>
            <person name="Yu Y."/>
            <person name="Kim H."/>
            <person name="Rambo T."/>
            <person name="Currie J."/>
            <person name="Collura K."/>
            <person name="Kernodle-Thompson S."/>
            <person name="Wei F."/>
            <person name="Kudrna K."/>
            <person name="Ammiraju J.S.S."/>
            <person name="Luo M."/>
            <person name="Goicoechea J.L."/>
            <person name="Wing R.A."/>
            <person name="Henry D."/>
            <person name="Oates R."/>
            <person name="Palmer M."/>
            <person name="Pries G."/>
            <person name="Saski C."/>
            <person name="Simmons J."/>
            <person name="Soderlund C."/>
            <person name="Nelson W."/>
            <person name="de la Bastide M."/>
            <person name="Spiegel L."/>
            <person name="Nascimento L."/>
            <person name="Huang E."/>
            <person name="Preston R."/>
            <person name="Zutavern T."/>
            <person name="Palmer L."/>
            <person name="O'Shaughnessy A."/>
            <person name="Dike S."/>
            <person name="McCombie W.R."/>
            <person name="Minx P."/>
            <person name="Cordum H."/>
            <person name="Wilson R."/>
            <person name="Jin W."/>
            <person name="Lee H.R."/>
            <person name="Jiang J."/>
            <person name="Jackson S."/>
        </authorList>
    </citation>
    <scope>NUCLEOTIDE SEQUENCE [LARGE SCALE GENOMIC DNA]</scope>
    <source>
        <strain>cv. Nipponbare</strain>
    </source>
</reference>
<reference key="2">
    <citation type="journal article" date="2005" name="Nature">
        <title>The map-based sequence of the rice genome.</title>
        <authorList>
            <consortium name="International rice genome sequencing project (IRGSP)"/>
        </authorList>
    </citation>
    <scope>NUCLEOTIDE SEQUENCE [LARGE SCALE GENOMIC DNA]</scope>
    <source>
        <strain>cv. Nipponbare</strain>
    </source>
</reference>
<reference key="3">
    <citation type="journal article" date="2008" name="Nucleic Acids Res.">
        <title>The rice annotation project database (RAP-DB): 2008 update.</title>
        <authorList>
            <consortium name="The rice annotation project (RAP)"/>
        </authorList>
    </citation>
    <scope>GENOME REANNOTATION</scope>
    <source>
        <strain>cv. Nipponbare</strain>
    </source>
</reference>
<reference key="4">
    <citation type="journal article" date="2013" name="Rice">
        <title>Improvement of the Oryza sativa Nipponbare reference genome using next generation sequence and optical map data.</title>
        <authorList>
            <person name="Kawahara Y."/>
            <person name="de la Bastide M."/>
            <person name="Hamilton J.P."/>
            <person name="Kanamori H."/>
            <person name="McCombie W.R."/>
            <person name="Ouyang S."/>
            <person name="Schwartz D.C."/>
            <person name="Tanaka T."/>
            <person name="Wu J."/>
            <person name="Zhou S."/>
            <person name="Childs K.L."/>
            <person name="Davidson R.M."/>
            <person name="Lin H."/>
            <person name="Quesada-Ocampo L."/>
            <person name="Vaillancourt B."/>
            <person name="Sakai H."/>
            <person name="Lee S.S."/>
            <person name="Kim J."/>
            <person name="Numa H."/>
            <person name="Itoh T."/>
            <person name="Buell C.R."/>
            <person name="Matsumoto T."/>
        </authorList>
    </citation>
    <scope>GENOME REANNOTATION</scope>
    <source>
        <strain>cv. Nipponbare</strain>
    </source>
</reference>
<reference key="5">
    <citation type="journal article" date="2003" name="Science">
        <title>Collection, mapping, and annotation of over 28,000 cDNA clones from japonica rice.</title>
        <authorList>
            <consortium name="The rice full-length cDNA consortium"/>
        </authorList>
    </citation>
    <scope>NUCLEOTIDE SEQUENCE [LARGE SCALE MRNA]</scope>
    <source>
        <strain>cv. Nipponbare</strain>
    </source>
</reference>
<reference evidence="11" key="6">
    <citation type="journal article" date="2016" name="Plant Cell">
        <title>Crystal structure of the GRAS domain of SCARECROW-LIKE7 in Oryza sativa.</title>
        <authorList>
            <person name="Li S."/>
            <person name="Zhao Y."/>
            <person name="Zhao Z."/>
            <person name="Wu X."/>
            <person name="Sun L."/>
            <person name="Liu Q."/>
            <person name="Wu Y."/>
        </authorList>
    </citation>
    <scope>X-RAY CRYSTALLOGRAPHY (1.82 ANGSTROMS) OF 204-578</scope>
    <scope>FUNCTION</scope>
    <scope>DNA-BINDING</scope>
    <scope>SUBUNIT</scope>
    <scope>DOMAIN</scope>
    <scope>MUTAGENESIS OF LYS-284; ARG-478; ARG-485; LYS-549 AND LYS-551</scope>
</reference>
<protein>
    <recommendedName>
        <fullName evidence="6">SCARECROW-LIKE protein 7</fullName>
    </recommendedName>
    <alternativeName>
        <fullName evidence="6">Os-SCL7</fullName>
    </alternativeName>
</protein>
<feature type="chain" id="PRO_0000442600" description="SCARECROW-LIKE protein 7">
    <location>
        <begin position="1"/>
        <end position="578"/>
    </location>
</feature>
<feature type="domain" description="GRAS" evidence="3">
    <location>
        <begin position="198"/>
        <end position="578"/>
    </location>
</feature>
<feature type="region of interest" description="Disordered" evidence="4">
    <location>
        <begin position="18"/>
        <end position="84"/>
    </location>
</feature>
<feature type="region of interest" description="Disordered" evidence="4">
    <location>
        <begin position="146"/>
        <end position="173"/>
    </location>
</feature>
<feature type="region of interest" description="Leucine repeat I (LRI)" evidence="3">
    <location>
        <begin position="205"/>
        <end position="264"/>
    </location>
</feature>
<feature type="region of interest" description="VHIID" evidence="3">
    <location>
        <begin position="283"/>
        <end position="349"/>
    </location>
</feature>
<feature type="region of interest" description="Leucine repeat II (LRII)" evidence="3">
    <location>
        <begin position="365"/>
        <end position="397"/>
    </location>
</feature>
<feature type="region of interest" description="PFYRE" evidence="3">
    <location>
        <begin position="406"/>
        <end position="497"/>
    </location>
</feature>
<feature type="region of interest" description="SAW" evidence="3">
    <location>
        <begin position="500"/>
        <end position="578"/>
    </location>
</feature>
<feature type="short sequence motif" description="VHIID" evidence="3">
    <location>
        <begin position="314"/>
        <end position="318"/>
    </location>
</feature>
<feature type="short sequence motif" description="LXXLL motif" evidence="3">
    <location>
        <begin position="414"/>
        <end position="418"/>
    </location>
</feature>
<feature type="compositionally biased region" description="Low complexity" evidence="4">
    <location>
        <begin position="18"/>
        <end position="29"/>
    </location>
</feature>
<feature type="compositionally biased region" description="Basic residues" evidence="4">
    <location>
        <begin position="49"/>
        <end position="61"/>
    </location>
</feature>
<feature type="compositionally biased region" description="Low complexity" evidence="4">
    <location>
        <begin position="62"/>
        <end position="74"/>
    </location>
</feature>
<feature type="compositionally biased region" description="Pro residues" evidence="4">
    <location>
        <begin position="146"/>
        <end position="156"/>
    </location>
</feature>
<feature type="compositionally biased region" description="Low complexity" evidence="4">
    <location>
        <begin position="157"/>
        <end position="173"/>
    </location>
</feature>
<feature type="mutagenesis site" description="Does not affect DNA-binding." evidence="5">
    <original>K</original>
    <variation>A</variation>
    <location>
        <position position="284"/>
    </location>
</feature>
<feature type="mutagenesis site" description="Loss of DNA-binding." evidence="5">
    <original>K</original>
    <variation>E</variation>
    <location>
        <position position="284"/>
    </location>
</feature>
<feature type="mutagenesis site" description="Loss of DNA-binding." evidence="5">
    <original>R</original>
    <variation>A</variation>
    <location>
        <position position="478"/>
    </location>
</feature>
<feature type="mutagenesis site" description="Loss of DNA-binding." evidence="5">
    <original>R</original>
    <variation>A</variation>
    <location>
        <position position="485"/>
    </location>
</feature>
<feature type="mutagenesis site" description="Loss of DNA-binding." evidence="5">
    <original>K</original>
    <variation>A</variation>
    <variation>E</variation>
    <location>
        <position position="549"/>
    </location>
</feature>
<feature type="mutagenesis site" description="Loss of DNA-binding." evidence="5">
    <original>K</original>
    <variation>A</variation>
    <location>
        <position position="551"/>
    </location>
</feature>
<feature type="helix" evidence="12">
    <location>
        <begin position="206"/>
        <end position="219"/>
    </location>
</feature>
<feature type="strand" evidence="12">
    <location>
        <begin position="220"/>
        <end position="222"/>
    </location>
</feature>
<feature type="helix" evidence="12">
    <location>
        <begin position="226"/>
        <end position="235"/>
    </location>
</feature>
<feature type="helix" evidence="12">
    <location>
        <begin position="242"/>
        <end position="260"/>
    </location>
</feature>
<feature type="helix" evidence="12">
    <location>
        <begin position="277"/>
        <end position="289"/>
    </location>
</feature>
<feature type="helix" evidence="12">
    <location>
        <begin position="292"/>
        <end position="307"/>
    </location>
</feature>
<feature type="turn" evidence="12">
    <location>
        <begin position="308"/>
        <end position="310"/>
    </location>
</feature>
<feature type="strand" evidence="12">
    <location>
        <begin position="312"/>
        <end position="321"/>
    </location>
</feature>
<feature type="helix" evidence="12">
    <location>
        <begin position="325"/>
        <end position="335"/>
    </location>
</feature>
<feature type="strand" evidence="12">
    <location>
        <begin position="343"/>
        <end position="351"/>
    </location>
</feature>
<feature type="helix" evidence="12">
    <location>
        <begin position="353"/>
        <end position="355"/>
    </location>
</feature>
<feature type="helix" evidence="12">
    <location>
        <begin position="360"/>
        <end position="376"/>
    </location>
</feature>
<feature type="strand" evidence="12">
    <location>
        <begin position="380"/>
        <end position="385"/>
    </location>
</feature>
<feature type="helix" evidence="12">
    <location>
        <begin position="390"/>
        <end position="392"/>
    </location>
</feature>
<feature type="helix" evidence="12">
    <location>
        <begin position="395"/>
        <end position="398"/>
    </location>
</feature>
<feature type="strand" evidence="12">
    <location>
        <begin position="404"/>
        <end position="412"/>
    </location>
</feature>
<feature type="helix" evidence="12">
    <location>
        <begin position="414"/>
        <end position="417"/>
    </location>
</feature>
<feature type="strand" evidence="12">
    <location>
        <begin position="420"/>
        <end position="422"/>
    </location>
</feature>
<feature type="helix" evidence="12">
    <location>
        <begin position="423"/>
        <end position="434"/>
    </location>
</feature>
<feature type="strand" evidence="12">
    <location>
        <begin position="438"/>
        <end position="445"/>
    </location>
</feature>
<feature type="strand" evidence="12">
    <location>
        <begin position="449"/>
        <end position="452"/>
    </location>
</feature>
<feature type="helix" evidence="12">
    <location>
        <begin position="454"/>
        <end position="475"/>
    </location>
</feature>
<feature type="helix" evidence="12">
    <location>
        <begin position="481"/>
        <end position="489"/>
    </location>
</feature>
<feature type="helix" evidence="12">
    <location>
        <begin position="491"/>
        <end position="499"/>
    </location>
</feature>
<feature type="helix" evidence="12">
    <location>
        <begin position="504"/>
        <end position="506"/>
    </location>
</feature>
<feature type="helix" evidence="12">
    <location>
        <begin position="514"/>
        <end position="523"/>
    </location>
</feature>
<feature type="strand" evidence="12">
    <location>
        <begin position="527"/>
        <end position="529"/>
    </location>
</feature>
<feature type="helix" evidence="12">
    <location>
        <begin position="535"/>
        <end position="542"/>
    </location>
</feature>
<feature type="turn" evidence="12">
    <location>
        <begin position="543"/>
        <end position="545"/>
    </location>
</feature>
<feature type="strand" evidence="12">
    <location>
        <begin position="552"/>
        <end position="557"/>
    </location>
</feature>
<feature type="turn" evidence="12">
    <location>
        <begin position="558"/>
        <end position="560"/>
    </location>
</feature>
<feature type="strand" evidence="12">
    <location>
        <begin position="561"/>
        <end position="566"/>
    </location>
</feature>
<feature type="strand" evidence="12">
    <location>
        <begin position="569"/>
        <end position="578"/>
    </location>
</feature>
<evidence type="ECO:0000250" key="1">
    <source>
        <dbReference type="UniProtKB" id="A0A024B7I0"/>
    </source>
</evidence>
<evidence type="ECO:0000250" key="2">
    <source>
        <dbReference type="UniProtKB" id="Q9SCR0"/>
    </source>
</evidence>
<evidence type="ECO:0000255" key="3">
    <source>
        <dbReference type="PROSITE-ProRule" id="PRU01191"/>
    </source>
</evidence>
<evidence type="ECO:0000256" key="4">
    <source>
        <dbReference type="SAM" id="MobiDB-lite"/>
    </source>
</evidence>
<evidence type="ECO:0000269" key="5">
    <source>
    </source>
</evidence>
<evidence type="ECO:0000303" key="6">
    <source>
    </source>
</evidence>
<evidence type="ECO:0000312" key="7">
    <source>
        <dbReference type="EMBL" id="AAX95685.1"/>
    </source>
</evidence>
<evidence type="ECO:0000312" key="8">
    <source>
        <dbReference type="EMBL" id="ABF98609.1"/>
    </source>
</evidence>
<evidence type="ECO:0000312" key="9">
    <source>
        <dbReference type="EMBL" id="BAF13029.1"/>
    </source>
</evidence>
<evidence type="ECO:0000312" key="10">
    <source>
        <dbReference type="EMBL" id="BAS86141.1"/>
    </source>
</evidence>
<evidence type="ECO:0007744" key="11">
    <source>
        <dbReference type="PDB" id="5HYZ"/>
    </source>
</evidence>
<evidence type="ECO:0007829" key="12">
    <source>
        <dbReference type="PDB" id="5HYZ"/>
    </source>
</evidence>
<gene>
    <name evidence="6" type="primary">SCL7</name>
    <name evidence="8" type="ordered locus">LOC_Os03g51330</name>
    <name evidence="9 10" type="ordered locus">Os03g0723000</name>
</gene>
<name>SCL7_ORYSJ</name>